<evidence type="ECO:0000250" key="1"/>
<evidence type="ECO:0000250" key="2">
    <source>
        <dbReference type="UniProtKB" id="P10238"/>
    </source>
</evidence>
<evidence type="ECO:0000256" key="3">
    <source>
        <dbReference type="SAM" id="MobiDB-lite"/>
    </source>
</evidence>
<evidence type="ECO:0000305" key="4"/>
<comment type="function">
    <text evidence="1">Multifunctional regulator of the expression of viral genes that mediates nuclear export of viral intronless mRNAs. This immediate early (EI) protein promotes the nuclear export of viral intronless mRNAs by interacting with mRNAs and host NXF1/TAP (By similarity).</text>
</comment>
<comment type="subunit">
    <text evidence="1">Associates in a complex with RNA, and host export factors NXF1/TAP and ALYREF; these interactions allow nuclear export of viral transcripts.</text>
</comment>
<comment type="subcellular location">
    <subcellularLocation>
        <location evidence="1">Host cytoplasm</location>
    </subcellularLocation>
    <subcellularLocation>
        <location evidence="1">Host nucleus</location>
    </subcellularLocation>
    <text evidence="1">Shuttles between the nucleus and the cytoplasm.</text>
</comment>
<comment type="similarity">
    <text evidence="4">Belongs to the HHV-1 ICP27 protein family.</text>
</comment>
<dbReference type="EMBL" id="AF243438">
    <property type="protein sequence ID" value="AAG14248.1"/>
    <property type="molecule type" value="Genomic_DNA"/>
</dbReference>
<dbReference type="RefSeq" id="YP_001033984.1">
    <property type="nucleotide sequence ID" value="NC_002229.3"/>
</dbReference>
<dbReference type="SMR" id="Q77MR3"/>
<dbReference type="GeneID" id="4811529"/>
<dbReference type="KEGG" id="vg:4811529"/>
<dbReference type="Proteomes" id="UP000008072">
    <property type="component" value="Segment"/>
</dbReference>
<dbReference type="GO" id="GO:0030430">
    <property type="term" value="C:host cell cytoplasm"/>
    <property type="evidence" value="ECO:0007669"/>
    <property type="project" value="UniProtKB-SubCell"/>
</dbReference>
<dbReference type="GO" id="GO:0042025">
    <property type="term" value="C:host cell nucleus"/>
    <property type="evidence" value="ECO:0007669"/>
    <property type="project" value="UniProtKB-SubCell"/>
</dbReference>
<dbReference type="GO" id="GO:0003723">
    <property type="term" value="F:RNA binding"/>
    <property type="evidence" value="ECO:0007669"/>
    <property type="project" value="UniProtKB-KW"/>
</dbReference>
<dbReference type="GO" id="GO:0008270">
    <property type="term" value="F:zinc ion binding"/>
    <property type="evidence" value="ECO:0007669"/>
    <property type="project" value="UniProtKB-KW"/>
</dbReference>
<dbReference type="GO" id="GO:0006355">
    <property type="term" value="P:regulation of DNA-templated transcription"/>
    <property type="evidence" value="ECO:0007669"/>
    <property type="project" value="InterPro"/>
</dbReference>
<dbReference type="InterPro" id="IPR008648">
    <property type="entry name" value="ICP27-like"/>
</dbReference>
<dbReference type="Pfam" id="PF05459">
    <property type="entry name" value="Herpes_UL69"/>
    <property type="match status" value="1"/>
</dbReference>
<organismHost>
    <name type="scientific">Gallus gallus</name>
    <name type="common">Chicken</name>
    <dbReference type="NCBI Taxonomy" id="9031"/>
</organismHost>
<keyword id="KW-0244">Early protein</keyword>
<keyword id="KW-1035">Host cytoplasm</keyword>
<keyword id="KW-1048">Host nucleus</keyword>
<keyword id="KW-0945">Host-virus interaction</keyword>
<keyword id="KW-0479">Metal-binding</keyword>
<keyword id="KW-1185">Reference proteome</keyword>
<keyword id="KW-0694">RNA-binding</keyword>
<keyword id="KW-0862">Zinc</keyword>
<keyword id="KW-0863">Zinc-finger</keyword>
<feature type="chain" id="PRO_0000406541" description="mRNA export factor ICP27 homolog">
    <location>
        <begin position="1"/>
        <end position="473"/>
    </location>
</feature>
<feature type="zinc finger region" description="CHC2-type" evidence="2">
    <location>
        <begin position="362"/>
        <end position="447"/>
    </location>
</feature>
<feature type="region of interest" description="Disordered" evidence="3">
    <location>
        <begin position="57"/>
        <end position="81"/>
    </location>
</feature>
<feature type="region of interest" description="Disordered" evidence="3">
    <location>
        <begin position="123"/>
        <end position="143"/>
    </location>
</feature>
<feature type="binding site" evidence="2">
    <location>
        <position position="362"/>
    </location>
    <ligand>
        <name>Zn(2+)</name>
        <dbReference type="ChEBI" id="CHEBI:29105"/>
    </ligand>
</feature>
<feature type="binding site" evidence="2">
    <location>
        <position position="438"/>
    </location>
    <ligand>
        <name>Zn(2+)</name>
        <dbReference type="ChEBI" id="CHEBI:29105"/>
    </ligand>
</feature>
<feature type="binding site" evidence="2">
    <location>
        <position position="442"/>
    </location>
    <ligand>
        <name>Zn(2+)</name>
        <dbReference type="ChEBI" id="CHEBI:29105"/>
    </ligand>
</feature>
<feature type="binding site" evidence="2">
    <location>
        <position position="447"/>
    </location>
    <ligand>
        <name>Zn(2+)</name>
        <dbReference type="ChEBI" id="CHEBI:29105"/>
    </ligand>
</feature>
<protein>
    <recommendedName>
        <fullName>mRNA export factor ICP27 homolog</fullName>
    </recommendedName>
    <alternativeName>
        <fullName>Transcriptional regulator IE63 homolog</fullName>
    </alternativeName>
</protein>
<gene>
    <name type="ORF">MDV068</name>
</gene>
<name>ICP27_GAHVM</name>
<reference key="1">
    <citation type="journal article" date="2000" name="J. Virol.">
        <title>The genome of a very virulent Marek's disease virus.</title>
        <authorList>
            <person name="Tulman E.R."/>
            <person name="Afonso C.L."/>
            <person name="Lu Z."/>
            <person name="Zsak L."/>
            <person name="Rock D.L."/>
            <person name="Kutish G.F."/>
        </authorList>
    </citation>
    <scope>NUCLEOTIDE SEQUENCE [LARGE SCALE GENOMIC DNA]</scope>
</reference>
<organism>
    <name type="scientific">Gallid herpesvirus 2 (strain Chicken/Md5/ATCC VR-987)</name>
    <name type="common">GaHV-2</name>
    <name type="synonym">Marek's disease herpesvirus type 1</name>
    <dbReference type="NCBI Taxonomy" id="10389"/>
    <lineage>
        <taxon>Viruses</taxon>
        <taxon>Duplodnaviria</taxon>
        <taxon>Heunggongvirae</taxon>
        <taxon>Peploviricota</taxon>
        <taxon>Herviviricetes</taxon>
        <taxon>Herpesvirales</taxon>
        <taxon>Orthoherpesviridae</taxon>
        <taxon>Alphaherpesvirinae</taxon>
        <taxon>Mardivirus</taxon>
        <taxon>Mardivirus gallidalpha2</taxon>
        <taxon>Gallid alphaherpesvirus 2</taxon>
    </lineage>
</organism>
<proteinExistence type="inferred from homology"/>
<accession>Q77MR3</accession>
<sequence>MSVDAFSRESDDMMSLLDYDFIEGSSSDENAEVTEMETSAKTANNKNEVLFAPPCTQELLTERPSPDSKNSQGDDDSNSIYGNVIRDAQHSASRYATRCLDNAIPRKRLRLANLTVDSACISQTKRPHGTGNRKQYHRRNFPMSPTSQEKIHLRLHNRLGSRSEKQQRSLNYDRRLQEGHHRRRFYSERRIYDQNHSHHRTHDIRVPLEKYRVSRQHDLPVHEELNEILQREKHRLASISNECDFRVSSKNRWAAVLTFSSNAESTLCGPQITWEYLLHAGPELRNTFEIRPRISLQASAAREAVLRGESFIAALGSAEETLSWLKLHAVLKLRLVNHDPIFKTAGAVLDNLRLKLAPIMMCKYGTEKRSMGDMLRRSAPEDINDSLTLCLILLSRIRRVMHRTSGSKYSYMIDPRGCMIDYVPGECMTNILRYVDAHTRRCSDPACNLYISCTLMPIYIHGRYFYCNTLFGM</sequence>